<keyword id="KW-0964">Secreted</keyword>
<keyword id="KW-0732">Signal</keyword>
<keyword id="KW-0800">Toxin</keyword>
<accession>P0CH58</accession>
<accession>E4VP33</accession>
<reference key="1">
    <citation type="journal article" date="2010" name="Biochimie">
        <title>Characterization of two linear cationic antimalarial peptides in the scorpion Mesobuthus eupeus.</title>
        <authorList>
            <person name="Gao B."/>
            <person name="Xu J."/>
            <person name="Del Carmen Rodriguez M."/>
            <person name="Lanz-Mendoza H."/>
            <person name="Hernandez-Rivas R."/>
            <person name="Du W."/>
            <person name="Zhu S."/>
        </authorList>
    </citation>
    <scope>NUCLEOTIDE SEQUENCE [MRNA]</scope>
    <scope>SYNTHESIS OF 32-56</scope>
    <scope>FUNCTION</scope>
    <source>
        <tissue>Venom gland</tissue>
    </source>
</reference>
<reference key="2">
    <citation type="journal article" date="2014" name="Peptides">
        <title>Scorpion venom peptides with no disulfide bridges: a review.</title>
        <authorList>
            <person name="Almaaytah A."/>
            <person name="Albalas Q."/>
        </authorList>
    </citation>
    <scope>NOMENCLATURE</scope>
</reference>
<feature type="signal peptide" evidence="2">
    <location>
        <begin position="1"/>
        <end position="31"/>
    </location>
</feature>
<feature type="peptide" id="PRO_0000398383" description="Meucin-25">
    <location>
        <begin position="32"/>
        <end position="56"/>
    </location>
</feature>
<sequence length="56" mass="6764">MFRIEYSLVQLLLRNVTIPLLLIIQMHIMSSVKLIQIRIWIQYVTVLQMFSMKTKQ</sequence>
<protein>
    <recommendedName>
        <fullName evidence="4">Meucin-25</fullName>
    </recommendedName>
    <alternativeName>
        <fullName evidence="4">BeL-170</fullName>
    </alternativeName>
    <alternativeName>
        <fullName evidence="5">Non-disulfide-bridged peptide 5.2</fullName>
        <shortName evidence="5">NDBP-5.2</shortName>
    </alternativeName>
</protein>
<comment type="function">
    <text evidence="3">This synthetic cationic peptide inhibits the development of Plasmodium berghei ookinetes, kills intraerythrocytic P.falciparum, and is cytotoxic to the Drosophila S2 cell at micromolar concentrations. No antibacterial, antifungal and hemolytic activities have been found at micromolar concentrations.</text>
</comment>
<comment type="subcellular location">
    <subcellularLocation>
        <location evidence="1">Secreted</location>
    </subcellularLocation>
</comment>
<comment type="tissue specificity">
    <text>Expressed by the venom gland.</text>
</comment>
<comment type="similarity">
    <text evidence="6">Belongs to the non-disulfide-bridged peptide (NDBP) superfamily. Antimalarial peptide (group 5) family.</text>
</comment>
<evidence type="ECO:0000250" key="1"/>
<evidence type="ECO:0000255" key="2"/>
<evidence type="ECO:0000269" key="3">
    <source>
    </source>
</evidence>
<evidence type="ECO:0000303" key="4">
    <source>
    </source>
</evidence>
<evidence type="ECO:0000303" key="5">
    <source>
    </source>
</evidence>
<evidence type="ECO:0000305" key="6"/>
<organism>
    <name type="scientific">Mesobuthus eupeus</name>
    <name type="common">Lesser Asian scorpion</name>
    <name type="synonym">Buthus eupeus</name>
    <dbReference type="NCBI Taxonomy" id="34648"/>
    <lineage>
        <taxon>Eukaryota</taxon>
        <taxon>Metazoa</taxon>
        <taxon>Ecdysozoa</taxon>
        <taxon>Arthropoda</taxon>
        <taxon>Chelicerata</taxon>
        <taxon>Arachnida</taxon>
        <taxon>Scorpiones</taxon>
        <taxon>Buthida</taxon>
        <taxon>Buthoidea</taxon>
        <taxon>Buthidae</taxon>
        <taxon>Mesobuthus</taxon>
    </lineage>
</organism>
<proteinExistence type="evidence at transcript level"/>
<dbReference type="EMBL" id="EF445075">
    <property type="protein sequence ID" value="ABR21050.1"/>
    <property type="molecule type" value="mRNA"/>
</dbReference>
<dbReference type="GO" id="GO:0005576">
    <property type="term" value="C:extracellular region"/>
    <property type="evidence" value="ECO:0007669"/>
    <property type="project" value="UniProtKB-SubCell"/>
</dbReference>
<dbReference type="GO" id="GO:0090729">
    <property type="term" value="F:toxin activity"/>
    <property type="evidence" value="ECO:0007669"/>
    <property type="project" value="UniProtKB-KW"/>
</dbReference>
<name>NDB52_MESEU</name>